<feature type="chain" id="PRO_0000378949" description="Centrosomal protein of 76 kDa">
    <location>
        <begin position="1"/>
        <end position="659"/>
    </location>
</feature>
<feature type="modified residue" description="Phosphoserine" evidence="3">
    <location>
        <position position="75"/>
    </location>
</feature>
<feature type="modified residue" description="Phosphoserine" evidence="3">
    <location>
        <position position="83"/>
    </location>
</feature>
<keyword id="KW-0963">Cytoplasm</keyword>
<keyword id="KW-0206">Cytoskeleton</keyword>
<keyword id="KW-0597">Phosphoprotein</keyword>
<keyword id="KW-1185">Reference proteome</keyword>
<dbReference type="EMBL" id="CH466528">
    <property type="protein sequence ID" value="EDL09636.1"/>
    <property type="molecule type" value="Genomic_DNA"/>
</dbReference>
<dbReference type="EMBL" id="BC119216">
    <property type="protein sequence ID" value="AAI19217.1"/>
    <property type="molecule type" value="mRNA"/>
</dbReference>
<dbReference type="EMBL" id="BC119218">
    <property type="protein sequence ID" value="AAI19219.1"/>
    <property type="molecule type" value="mRNA"/>
</dbReference>
<dbReference type="CCDS" id="CCDS37850.1"/>
<dbReference type="RefSeq" id="NP_001074542.1">
    <property type="nucleotide sequence ID" value="NM_001081073.2"/>
</dbReference>
<dbReference type="SMR" id="Q0VEJ0"/>
<dbReference type="BioGRID" id="230419">
    <property type="interactions" value="49"/>
</dbReference>
<dbReference type="FunCoup" id="Q0VEJ0">
    <property type="interactions" value="1190"/>
</dbReference>
<dbReference type="IntAct" id="Q0VEJ0">
    <property type="interactions" value="19"/>
</dbReference>
<dbReference type="STRING" id="10090.ENSMUSP00000095149"/>
<dbReference type="iPTMnet" id="Q0VEJ0"/>
<dbReference type="PhosphoSitePlus" id="Q0VEJ0"/>
<dbReference type="SwissPalm" id="Q0VEJ0"/>
<dbReference type="jPOST" id="Q0VEJ0"/>
<dbReference type="PaxDb" id="10090-ENSMUSP00000095149"/>
<dbReference type="PeptideAtlas" id="Q0VEJ0"/>
<dbReference type="ProteomicsDB" id="280071"/>
<dbReference type="Antibodypedia" id="21948">
    <property type="antibodies" value="149 antibodies from 23 providers"/>
</dbReference>
<dbReference type="Ensembl" id="ENSMUST00000097542.4">
    <property type="protein sequence ID" value="ENSMUSP00000095149.3"/>
    <property type="gene ID" value="ENSMUSG00000073542.4"/>
</dbReference>
<dbReference type="GeneID" id="225659"/>
<dbReference type="KEGG" id="mmu:225659"/>
<dbReference type="UCSC" id="uc008fmq.1">
    <property type="organism name" value="mouse"/>
</dbReference>
<dbReference type="AGR" id="MGI:1923401"/>
<dbReference type="CTD" id="79959"/>
<dbReference type="MGI" id="MGI:1923401">
    <property type="gene designation" value="Cep76"/>
</dbReference>
<dbReference type="VEuPathDB" id="HostDB:ENSMUSG00000073542"/>
<dbReference type="eggNOG" id="ENOG502QQEI">
    <property type="taxonomic scope" value="Eukaryota"/>
</dbReference>
<dbReference type="GeneTree" id="ENSGT00390000000781"/>
<dbReference type="HOGENOM" id="CLU_027144_0_0_1"/>
<dbReference type="InParanoid" id="Q0VEJ0"/>
<dbReference type="OMA" id="RRWWSEY"/>
<dbReference type="OrthoDB" id="5527234at2759"/>
<dbReference type="PhylomeDB" id="Q0VEJ0"/>
<dbReference type="TreeFam" id="TF329324"/>
<dbReference type="Reactome" id="R-MMU-2565942">
    <property type="pathway name" value="Regulation of PLK1 Activity at G2/M Transition"/>
</dbReference>
<dbReference type="Reactome" id="R-MMU-380259">
    <property type="pathway name" value="Loss of Nlp from mitotic centrosomes"/>
</dbReference>
<dbReference type="Reactome" id="R-MMU-380270">
    <property type="pathway name" value="Recruitment of mitotic centrosome proteins and complexes"/>
</dbReference>
<dbReference type="Reactome" id="R-MMU-380284">
    <property type="pathway name" value="Loss of proteins required for interphase microtubule organization from the centrosome"/>
</dbReference>
<dbReference type="Reactome" id="R-MMU-380320">
    <property type="pathway name" value="Recruitment of NuMA to mitotic centrosomes"/>
</dbReference>
<dbReference type="Reactome" id="R-MMU-5620912">
    <property type="pathway name" value="Anchoring of the basal body to the plasma membrane"/>
</dbReference>
<dbReference type="Reactome" id="R-MMU-8854518">
    <property type="pathway name" value="AURKA Activation by TPX2"/>
</dbReference>
<dbReference type="BioGRID-ORCS" id="225659">
    <property type="hits" value="5 hits in 78 CRISPR screens"/>
</dbReference>
<dbReference type="ChiTaRS" id="Cep76">
    <property type="organism name" value="mouse"/>
</dbReference>
<dbReference type="PRO" id="PR:Q0VEJ0"/>
<dbReference type="Proteomes" id="UP000000589">
    <property type="component" value="Chromosome 18"/>
</dbReference>
<dbReference type="RNAct" id="Q0VEJ0">
    <property type="molecule type" value="protein"/>
</dbReference>
<dbReference type="Bgee" id="ENSMUSG00000073542">
    <property type="expression patterns" value="Expressed in spermatocyte and 215 other cell types or tissues"/>
</dbReference>
<dbReference type="GO" id="GO:0005814">
    <property type="term" value="C:centriole"/>
    <property type="evidence" value="ECO:0000250"/>
    <property type="project" value="UniProtKB"/>
</dbReference>
<dbReference type="GO" id="GO:0005813">
    <property type="term" value="C:centrosome"/>
    <property type="evidence" value="ECO:0007669"/>
    <property type="project" value="UniProtKB-SubCell"/>
</dbReference>
<dbReference type="GO" id="GO:0005737">
    <property type="term" value="C:cytoplasm"/>
    <property type="evidence" value="ECO:0007669"/>
    <property type="project" value="UniProtKB-KW"/>
</dbReference>
<dbReference type="GO" id="GO:0032991">
    <property type="term" value="C:protein-containing complex"/>
    <property type="evidence" value="ECO:0000266"/>
    <property type="project" value="MGI"/>
</dbReference>
<dbReference type="GO" id="GO:0046599">
    <property type="term" value="P:regulation of centriole replication"/>
    <property type="evidence" value="ECO:0000250"/>
    <property type="project" value="UniProtKB"/>
</dbReference>
<dbReference type="FunFam" id="3.10.620.30:FF:000003">
    <property type="entry name" value="Centrosomal protein of 76 kDa"/>
    <property type="match status" value="1"/>
</dbReference>
<dbReference type="Gene3D" id="3.10.620.30">
    <property type="match status" value="1"/>
</dbReference>
<dbReference type="InterPro" id="IPR052299">
    <property type="entry name" value="CEP76"/>
</dbReference>
<dbReference type="InterPro" id="IPR028926">
    <property type="entry name" value="CEP76-C2"/>
</dbReference>
<dbReference type="InterPro" id="IPR056288">
    <property type="entry name" value="CEP76_C"/>
</dbReference>
<dbReference type="InterPro" id="IPR056289">
    <property type="entry name" value="CEP76_N"/>
</dbReference>
<dbReference type="InterPro" id="IPR056290">
    <property type="entry name" value="CEPT76/DRC7_peptidase-like_dom"/>
</dbReference>
<dbReference type="InterPro" id="IPR038765">
    <property type="entry name" value="Papain-like_cys_pep_sf"/>
</dbReference>
<dbReference type="PANTHER" id="PTHR46436">
    <property type="entry name" value="CENTROSOMAL PROTEIN OF 76 KDA"/>
    <property type="match status" value="1"/>
</dbReference>
<dbReference type="PANTHER" id="PTHR46436:SF1">
    <property type="entry name" value="CENTROSOMAL PROTEIN OF 76 KDA"/>
    <property type="match status" value="1"/>
</dbReference>
<dbReference type="Pfam" id="PF15627">
    <property type="entry name" value="CEP76-C2"/>
    <property type="match status" value="1"/>
</dbReference>
<dbReference type="Pfam" id="PF24652">
    <property type="entry name" value="CEP76_C"/>
    <property type="match status" value="1"/>
</dbReference>
<dbReference type="Pfam" id="PF24654">
    <property type="entry name" value="CEP76_N"/>
    <property type="match status" value="1"/>
</dbReference>
<dbReference type="Pfam" id="PF24656">
    <property type="entry name" value="CEPT76_peptidase"/>
    <property type="match status" value="1"/>
</dbReference>
<dbReference type="SUPFAM" id="SSF54001">
    <property type="entry name" value="Cysteine proteinases"/>
    <property type="match status" value="1"/>
</dbReference>
<protein>
    <recommendedName>
        <fullName>Centrosomal protein of 76 kDa</fullName>
        <shortName>Cep76</shortName>
    </recommendedName>
</protein>
<reference key="1">
    <citation type="submission" date="2005-09" db="EMBL/GenBank/DDBJ databases">
        <authorList>
            <person name="Mural R.J."/>
            <person name="Adams M.D."/>
            <person name="Myers E.W."/>
            <person name="Smith H.O."/>
            <person name="Venter J.C."/>
        </authorList>
    </citation>
    <scope>NUCLEOTIDE SEQUENCE [LARGE SCALE GENOMIC DNA]</scope>
</reference>
<reference key="2">
    <citation type="journal article" date="2004" name="Genome Res.">
        <title>The status, quality, and expansion of the NIH full-length cDNA project: the Mammalian Gene Collection (MGC).</title>
        <authorList>
            <consortium name="The MGC Project Team"/>
        </authorList>
    </citation>
    <scope>NUCLEOTIDE SEQUENCE [LARGE SCALE MRNA]</scope>
    <source>
        <tissue>Brain</tissue>
    </source>
</reference>
<reference key="3">
    <citation type="journal article" date="2010" name="Cell">
        <title>A tissue-specific atlas of mouse protein phosphorylation and expression.</title>
        <authorList>
            <person name="Huttlin E.L."/>
            <person name="Jedrychowski M.P."/>
            <person name="Elias J.E."/>
            <person name="Goswami T."/>
            <person name="Rad R."/>
            <person name="Beausoleil S.A."/>
            <person name="Villen J."/>
            <person name="Haas W."/>
            <person name="Sowa M.E."/>
            <person name="Gygi S.P."/>
        </authorList>
    </citation>
    <scope>PHOSPHORYLATION [LARGE SCALE ANALYSIS] AT SER-75 AND SER-83</scope>
    <scope>IDENTIFICATION BY MASS SPECTROMETRY [LARGE SCALE ANALYSIS]</scope>
    <source>
        <tissue>Brain</tissue>
        <tissue>Lung</tissue>
    </source>
</reference>
<accession>Q0VEJ0</accession>
<sequence>MSLPPEKASELKQLIHQQLSKMDVHGRIREILAETIREELAPDQQHLSTEDLIKALRRRGIIDDVMKELNFVTDSVDQELPSSPKQTVGFDKQSTLKKTNVDPTRRYLYLQVLGGKAFLEHLQEPEPLPGQICSTFTLCLHYRNQRFRSKPVPCACEPDFHDGFLLEVHRESLGDGTRMADSTTMLSISDPIHMVLIKTDIFGETTLVASYFLEWRSVLGSENGVTNLTVELMGVGTESKVSVGILNIKLEMYPPLSQTLSQEVVNTQLALERQKTAEKERLFLVYAKQWWREYLQIRPSHNSRLVKIFAQDENGINRPVCSYVKPLRAGRLLDTPRQAARFVNVLGYERAPVIGGGGKQEQWCTLLAFLCRNKGDCEDHANLLCSLLLGYGLEAFVCVGTKAKGAPHAWVMTCGTDGTIMFWESLTGHRYIHKPTNPDGPPLAEQPKPLYPYRTIGCVFNHQMFLGNCQPSDAVETCIFDLNDESKWKPMSEEAIKSVCAPGATTSLPPFPPLCASTIDASVTSNEIEMQLRLLVSEHRKDLGLTTVWEDQLSYLLSPALASYEFERTTSISAGNEEFQDAIRRAVPDGHTFKGFPIHFVYRNARRAFATCLRSPFCEEIICCRGDQVRLAVRVRVFTYPESACAVWIMFACKYRSVL</sequence>
<evidence type="ECO:0000250" key="1"/>
<evidence type="ECO:0000305" key="2"/>
<evidence type="ECO:0007744" key="3">
    <source>
    </source>
</evidence>
<organism>
    <name type="scientific">Mus musculus</name>
    <name type="common">Mouse</name>
    <dbReference type="NCBI Taxonomy" id="10090"/>
    <lineage>
        <taxon>Eukaryota</taxon>
        <taxon>Metazoa</taxon>
        <taxon>Chordata</taxon>
        <taxon>Craniata</taxon>
        <taxon>Vertebrata</taxon>
        <taxon>Euteleostomi</taxon>
        <taxon>Mammalia</taxon>
        <taxon>Eutheria</taxon>
        <taxon>Euarchontoglires</taxon>
        <taxon>Glires</taxon>
        <taxon>Rodentia</taxon>
        <taxon>Myomorpha</taxon>
        <taxon>Muroidea</taxon>
        <taxon>Muridae</taxon>
        <taxon>Murinae</taxon>
        <taxon>Mus</taxon>
        <taxon>Mus</taxon>
    </lineage>
</organism>
<proteinExistence type="evidence at protein level"/>
<name>CEP76_MOUSE</name>
<comment type="function">
    <text evidence="1">Centrosomal protein involved in regulation of centriole duplication. Required to limit centriole duplication to once per cell cycle by preventing centriole reduplication (By similarity).</text>
</comment>
<comment type="subunit">
    <text evidence="1">Interacts with CCP110 and CEP97.</text>
</comment>
<comment type="subcellular location">
    <subcellularLocation>
        <location evidence="1">Cytoplasm</location>
        <location evidence="1">Cytoskeleton</location>
        <location evidence="1">Microtubule organizing center</location>
        <location evidence="1">Centrosome</location>
    </subcellularLocation>
    <subcellularLocation>
        <location evidence="1">Cytoplasm</location>
        <location evidence="1">Cytoskeleton</location>
        <location evidence="1">Microtubule organizing center</location>
        <location evidence="1">Centrosome</location>
        <location evidence="1">Centriole</location>
    </subcellularLocation>
    <text evidence="1">Does not localize along the ciliary axoneme.</text>
</comment>
<comment type="similarity">
    <text evidence="2">Belongs to the CEP76 family.</text>
</comment>
<gene>
    <name type="primary">Cep76</name>
</gene>